<feature type="chain" id="PRO_0000192479" description="Protein RnfH">
    <location>
        <begin position="1"/>
        <end position="86"/>
    </location>
</feature>
<feature type="strand" evidence="2">
    <location>
        <begin position="3"/>
        <end position="7"/>
    </location>
</feature>
<feature type="strand" evidence="2">
    <location>
        <begin position="10"/>
        <end position="12"/>
    </location>
</feature>
<feature type="strand" evidence="2">
    <location>
        <begin position="14"/>
        <end position="18"/>
    </location>
</feature>
<feature type="helix" evidence="2">
    <location>
        <begin position="26"/>
        <end position="33"/>
    </location>
</feature>
<feature type="helix" evidence="2">
    <location>
        <begin position="35"/>
        <end position="38"/>
    </location>
</feature>
<feature type="turn" evidence="2">
    <location>
        <begin position="44"/>
        <end position="46"/>
    </location>
</feature>
<feature type="strand" evidence="2">
    <location>
        <begin position="47"/>
        <end position="51"/>
    </location>
</feature>
<feature type="strand" evidence="2">
    <location>
        <begin position="67"/>
        <end position="71"/>
    </location>
</feature>
<comment type="similarity">
    <text evidence="1">Belongs to the UPF0125 (RnfH) family.</text>
</comment>
<gene>
    <name type="primary">rnfH</name>
    <name type="ordered locus">Avin_50920</name>
</gene>
<reference key="1">
    <citation type="submission" date="2000-08" db="EMBL/GenBank/DDBJ databases">
        <title>Cloning and mutational analysis of the Azotobacter vinelandii gene encoding the dinitrogenase gamma subunit.</title>
        <authorList>
            <person name="Rubio L.M."/>
            <person name="Rangaraj P."/>
            <person name="Roberts G.P."/>
            <person name="Ludden P.W."/>
        </authorList>
    </citation>
    <scope>NUCLEOTIDE SEQUENCE [GENOMIC DNA]</scope>
</reference>
<reference key="2">
    <citation type="journal article" date="2009" name="J. Bacteriol.">
        <title>Genome sequence of Azotobacter vinelandii, an obligate aerobe specialized to support diverse anaerobic metabolic processes.</title>
        <authorList>
            <person name="Setubal J.C."/>
            <person name="Dos Santos P."/>
            <person name="Goldman B.S."/>
            <person name="Ertesvaag H."/>
            <person name="Espin G."/>
            <person name="Rubio L.M."/>
            <person name="Valla S."/>
            <person name="Almeida N.F."/>
            <person name="Balasubramanian D."/>
            <person name="Cromes L."/>
            <person name="Curatti L."/>
            <person name="Du Z."/>
            <person name="Godsy E."/>
            <person name="Goodner B."/>
            <person name="Hellner-Burris K."/>
            <person name="Hernandez J.A."/>
            <person name="Houmiel K."/>
            <person name="Imperial J."/>
            <person name="Kennedy C."/>
            <person name="Larson T.J."/>
            <person name="Latreille P."/>
            <person name="Ligon L.S."/>
            <person name="Lu J."/>
            <person name="Maerk M."/>
            <person name="Miller N.M."/>
            <person name="Norton S."/>
            <person name="O'Carroll I.P."/>
            <person name="Paulsen I."/>
            <person name="Raulfs E.C."/>
            <person name="Roemer R."/>
            <person name="Rosser J."/>
            <person name="Segura D."/>
            <person name="Slater S."/>
            <person name="Stricklin S.L."/>
            <person name="Studholme D.J."/>
            <person name="Sun J."/>
            <person name="Viana C.J."/>
            <person name="Wallin E."/>
            <person name="Wang B."/>
            <person name="Wheeler C."/>
            <person name="Zhu H."/>
            <person name="Dean D.R."/>
            <person name="Dixon R."/>
            <person name="Wood D."/>
        </authorList>
    </citation>
    <scope>NUCLEOTIDE SEQUENCE [LARGE SCALE GENOMIC DNA]</scope>
    <source>
        <strain>DJ / ATCC BAA-1303</strain>
    </source>
</reference>
<proteinExistence type="evidence at protein level"/>
<accession>Q9F5Y0</accession>
<accession>C1DMA2</accession>
<evidence type="ECO:0000305" key="1"/>
<evidence type="ECO:0007829" key="2">
    <source>
        <dbReference type="PDB" id="8AHX"/>
    </source>
</evidence>
<sequence length="86" mass="9632">MRVSVVYADPAKPLQLSCKVEDGCSVEQAIQQSGVLRCCPDIDLKKQKVGVFGKFVKLDSPLKDGDRIEIYQRVTRVDDDDDDDDD</sequence>
<name>RNFH_AZOVD</name>
<protein>
    <recommendedName>
        <fullName>Protein RnfH</fullName>
    </recommendedName>
</protein>
<organism>
    <name type="scientific">Azotobacter vinelandii (strain DJ / ATCC BAA-1303)</name>
    <dbReference type="NCBI Taxonomy" id="322710"/>
    <lineage>
        <taxon>Bacteria</taxon>
        <taxon>Pseudomonadati</taxon>
        <taxon>Pseudomonadota</taxon>
        <taxon>Gammaproteobacteria</taxon>
        <taxon>Pseudomonadales</taxon>
        <taxon>Pseudomonadaceae</taxon>
        <taxon>Azotobacter</taxon>
    </lineage>
</organism>
<keyword id="KW-0002">3D-structure</keyword>
<dbReference type="EMBL" id="AF302049">
    <property type="protein sequence ID" value="AAG29821.1"/>
    <property type="molecule type" value="Genomic_DNA"/>
</dbReference>
<dbReference type="EMBL" id="CP001157">
    <property type="protein sequence ID" value="ACO81179.1"/>
    <property type="molecule type" value="Genomic_DNA"/>
</dbReference>
<dbReference type="RefSeq" id="WP_012703532.1">
    <property type="nucleotide sequence ID" value="NC_012560.1"/>
</dbReference>
<dbReference type="PDB" id="8AHX">
    <property type="method" value="EM"/>
    <property type="resolution" value="3.11 A"/>
    <property type="chains" value="H=1-86"/>
</dbReference>
<dbReference type="PDB" id="8RB8">
    <property type="method" value="EM"/>
    <property type="resolution" value="3.41 A"/>
    <property type="chains" value="H=1-86"/>
</dbReference>
<dbReference type="PDB" id="8RB9">
    <property type="method" value="EM"/>
    <property type="resolution" value="3.19 A"/>
    <property type="chains" value="H=1-86"/>
</dbReference>
<dbReference type="PDB" id="8RBQ">
    <property type="method" value="EM"/>
    <property type="resolution" value="3.32 A"/>
    <property type="chains" value="H=1-86"/>
</dbReference>
<dbReference type="PDBsum" id="8AHX"/>
<dbReference type="PDBsum" id="8RB8"/>
<dbReference type="PDBsum" id="8RB9"/>
<dbReference type="PDBsum" id="8RBQ"/>
<dbReference type="EMDB" id="EMD-15452"/>
<dbReference type="EMDB" id="EMD-19028"/>
<dbReference type="EMDB" id="EMD-19029"/>
<dbReference type="EMDB" id="EMD-19034"/>
<dbReference type="SMR" id="Q9F5Y0"/>
<dbReference type="STRING" id="322710.Avin_50920"/>
<dbReference type="EnsemblBacteria" id="ACO81179">
    <property type="protein sequence ID" value="ACO81179"/>
    <property type="gene ID" value="Avin_50920"/>
</dbReference>
<dbReference type="GeneID" id="88187926"/>
<dbReference type="KEGG" id="avn:Avin_50920"/>
<dbReference type="eggNOG" id="COG2914">
    <property type="taxonomic scope" value="Bacteria"/>
</dbReference>
<dbReference type="HOGENOM" id="CLU_150721_1_0_6"/>
<dbReference type="OrthoDB" id="9796575at2"/>
<dbReference type="Proteomes" id="UP000002424">
    <property type="component" value="Chromosome"/>
</dbReference>
<dbReference type="Gene3D" id="3.10.20.280">
    <property type="entry name" value="RnfH-like"/>
    <property type="match status" value="1"/>
</dbReference>
<dbReference type="HAMAP" id="MF_00460">
    <property type="entry name" value="UPF0125_RnfH"/>
    <property type="match status" value="1"/>
</dbReference>
<dbReference type="InterPro" id="IPR016155">
    <property type="entry name" value="Mopterin_synth/thiamin_S_b"/>
</dbReference>
<dbReference type="InterPro" id="IPR005346">
    <property type="entry name" value="RnfH"/>
</dbReference>
<dbReference type="InterPro" id="IPR037021">
    <property type="entry name" value="RnfH_sf"/>
</dbReference>
<dbReference type="PANTHER" id="PTHR37483">
    <property type="entry name" value="UPF0125 PROTEIN RATB"/>
    <property type="match status" value="1"/>
</dbReference>
<dbReference type="PANTHER" id="PTHR37483:SF1">
    <property type="entry name" value="UPF0125 PROTEIN RATB"/>
    <property type="match status" value="1"/>
</dbReference>
<dbReference type="Pfam" id="PF03658">
    <property type="entry name" value="Ub-RnfH"/>
    <property type="match status" value="1"/>
</dbReference>
<dbReference type="SUPFAM" id="SSF54285">
    <property type="entry name" value="MoaD/ThiS"/>
    <property type="match status" value="1"/>
</dbReference>